<sequence>MSMDNLVRLVEKDQYKQLPDFRPGDTVKVHVKIVEGGKERIQIFEGIVIKIRGSGLGKTFTVRKIASGGIGVERTFPYHSPVVQKIEIVKKAVTRRAKLYYIRDIRGKIRLKERKE</sequence>
<protein>
    <recommendedName>
        <fullName evidence="1">Large ribosomal subunit protein bL19</fullName>
    </recommendedName>
    <alternativeName>
        <fullName evidence="2">50S ribosomal protein L19</fullName>
    </alternativeName>
</protein>
<name>RL19_PSELT</name>
<keyword id="KW-1185">Reference proteome</keyword>
<keyword id="KW-0687">Ribonucleoprotein</keyword>
<keyword id="KW-0689">Ribosomal protein</keyword>
<feature type="chain" id="PRO_1000060806" description="Large ribosomal subunit protein bL19">
    <location>
        <begin position="1"/>
        <end position="116"/>
    </location>
</feature>
<accession>A8F3F9</accession>
<evidence type="ECO:0000255" key="1">
    <source>
        <dbReference type="HAMAP-Rule" id="MF_00402"/>
    </source>
</evidence>
<evidence type="ECO:0000305" key="2"/>
<comment type="function">
    <text evidence="1">This protein is located at the 30S-50S ribosomal subunit interface and may play a role in the structure and function of the aminoacyl-tRNA binding site.</text>
</comment>
<comment type="similarity">
    <text evidence="1">Belongs to the bacterial ribosomal protein bL19 family.</text>
</comment>
<reference key="1">
    <citation type="submission" date="2007-08" db="EMBL/GenBank/DDBJ databases">
        <title>Complete sequence of Thermotoga lettingae TMO.</title>
        <authorList>
            <consortium name="US DOE Joint Genome Institute"/>
            <person name="Copeland A."/>
            <person name="Lucas S."/>
            <person name="Lapidus A."/>
            <person name="Barry K."/>
            <person name="Glavina del Rio T."/>
            <person name="Dalin E."/>
            <person name="Tice H."/>
            <person name="Pitluck S."/>
            <person name="Foster B."/>
            <person name="Bruce D."/>
            <person name="Schmutz J."/>
            <person name="Larimer F."/>
            <person name="Land M."/>
            <person name="Hauser L."/>
            <person name="Kyrpides N."/>
            <person name="Mikhailova N."/>
            <person name="Nelson K."/>
            <person name="Gogarten J.P."/>
            <person name="Noll K."/>
            <person name="Richardson P."/>
        </authorList>
    </citation>
    <scope>NUCLEOTIDE SEQUENCE [LARGE SCALE GENOMIC DNA]</scope>
    <source>
        <strain>ATCC BAA-301 / DSM 14385 / NBRC 107922 / TMO</strain>
    </source>
</reference>
<organism>
    <name type="scientific">Pseudothermotoga lettingae (strain ATCC BAA-301 / DSM 14385 / NBRC 107922 / TMO)</name>
    <name type="common">Thermotoga lettingae</name>
    <dbReference type="NCBI Taxonomy" id="416591"/>
    <lineage>
        <taxon>Bacteria</taxon>
        <taxon>Thermotogati</taxon>
        <taxon>Thermotogota</taxon>
        <taxon>Thermotogae</taxon>
        <taxon>Thermotogales</taxon>
        <taxon>Thermotogaceae</taxon>
        <taxon>Pseudothermotoga</taxon>
    </lineage>
</organism>
<dbReference type="EMBL" id="CP000812">
    <property type="protein sequence ID" value="ABV32693.1"/>
    <property type="molecule type" value="Genomic_DNA"/>
</dbReference>
<dbReference type="SMR" id="A8F3F9"/>
<dbReference type="STRING" id="416591.Tlet_0123"/>
<dbReference type="KEGG" id="tle:Tlet_0123"/>
<dbReference type="eggNOG" id="COG0335">
    <property type="taxonomic scope" value="Bacteria"/>
</dbReference>
<dbReference type="HOGENOM" id="CLU_103507_2_2_0"/>
<dbReference type="OrthoDB" id="9803541at2"/>
<dbReference type="Proteomes" id="UP000002016">
    <property type="component" value="Chromosome"/>
</dbReference>
<dbReference type="GO" id="GO:0022625">
    <property type="term" value="C:cytosolic large ribosomal subunit"/>
    <property type="evidence" value="ECO:0007669"/>
    <property type="project" value="TreeGrafter"/>
</dbReference>
<dbReference type="GO" id="GO:0003735">
    <property type="term" value="F:structural constituent of ribosome"/>
    <property type="evidence" value="ECO:0007669"/>
    <property type="project" value="InterPro"/>
</dbReference>
<dbReference type="GO" id="GO:0006412">
    <property type="term" value="P:translation"/>
    <property type="evidence" value="ECO:0007669"/>
    <property type="project" value="UniProtKB-UniRule"/>
</dbReference>
<dbReference type="Gene3D" id="2.30.30.790">
    <property type="match status" value="1"/>
</dbReference>
<dbReference type="HAMAP" id="MF_00402">
    <property type="entry name" value="Ribosomal_bL19"/>
    <property type="match status" value="1"/>
</dbReference>
<dbReference type="InterPro" id="IPR001857">
    <property type="entry name" value="Ribosomal_bL19"/>
</dbReference>
<dbReference type="InterPro" id="IPR018257">
    <property type="entry name" value="Ribosomal_bL19_CS"/>
</dbReference>
<dbReference type="InterPro" id="IPR038657">
    <property type="entry name" value="Ribosomal_bL19_sf"/>
</dbReference>
<dbReference type="InterPro" id="IPR008991">
    <property type="entry name" value="Translation_prot_SH3-like_sf"/>
</dbReference>
<dbReference type="NCBIfam" id="TIGR01024">
    <property type="entry name" value="rplS_bact"/>
    <property type="match status" value="1"/>
</dbReference>
<dbReference type="PANTHER" id="PTHR15680:SF9">
    <property type="entry name" value="LARGE RIBOSOMAL SUBUNIT PROTEIN BL19M"/>
    <property type="match status" value="1"/>
</dbReference>
<dbReference type="PANTHER" id="PTHR15680">
    <property type="entry name" value="RIBOSOMAL PROTEIN L19"/>
    <property type="match status" value="1"/>
</dbReference>
<dbReference type="Pfam" id="PF01245">
    <property type="entry name" value="Ribosomal_L19"/>
    <property type="match status" value="1"/>
</dbReference>
<dbReference type="PIRSF" id="PIRSF002191">
    <property type="entry name" value="Ribosomal_L19"/>
    <property type="match status" value="1"/>
</dbReference>
<dbReference type="PRINTS" id="PR00061">
    <property type="entry name" value="RIBOSOMALL19"/>
</dbReference>
<dbReference type="SUPFAM" id="SSF50104">
    <property type="entry name" value="Translation proteins SH3-like domain"/>
    <property type="match status" value="1"/>
</dbReference>
<dbReference type="PROSITE" id="PS01015">
    <property type="entry name" value="RIBOSOMAL_L19"/>
    <property type="match status" value="1"/>
</dbReference>
<proteinExistence type="inferred from homology"/>
<gene>
    <name evidence="1" type="primary">rplS</name>
    <name type="ordered locus">Tlet_0123</name>
</gene>